<accession>Q8RDI4</accession>
<feature type="chain" id="PRO_0000190414" description="Recombination protein RecR">
    <location>
        <begin position="1"/>
        <end position="199"/>
    </location>
</feature>
<feature type="domain" description="Toprim" evidence="1">
    <location>
        <begin position="81"/>
        <end position="176"/>
    </location>
</feature>
<feature type="zinc finger region" description="C4-type" evidence="1">
    <location>
        <begin position="58"/>
        <end position="73"/>
    </location>
</feature>
<feature type="helix" evidence="2">
    <location>
        <begin position="6"/>
        <end position="16"/>
    </location>
</feature>
<feature type="helix" evidence="2">
    <location>
        <begin position="23"/>
        <end position="33"/>
    </location>
</feature>
<feature type="helix" evidence="2">
    <location>
        <begin position="38"/>
        <end position="54"/>
    </location>
</feature>
<feature type="turn" evidence="2">
    <location>
        <begin position="59"/>
        <end position="61"/>
    </location>
</feature>
<feature type="strand" evidence="2">
    <location>
        <begin position="64"/>
        <end position="69"/>
    </location>
</feature>
<feature type="helix" evidence="2">
    <location>
        <begin position="71"/>
        <end position="74"/>
    </location>
</feature>
<feature type="strand" evidence="2">
    <location>
        <begin position="78"/>
        <end position="88"/>
    </location>
</feature>
<feature type="helix" evidence="2">
    <location>
        <begin position="89"/>
        <end position="96"/>
    </location>
</feature>
<feature type="strand" evidence="2">
    <location>
        <begin position="103"/>
        <end position="107"/>
    </location>
</feature>
<feature type="turn" evidence="2">
    <location>
        <begin position="114"/>
        <end position="117"/>
    </location>
</feature>
<feature type="helix" evidence="2">
    <location>
        <begin position="120"/>
        <end position="122"/>
    </location>
</feature>
<feature type="helix" evidence="2">
    <location>
        <begin position="125"/>
        <end position="134"/>
    </location>
</feature>
<feature type="strand" evidence="2">
    <location>
        <begin position="138"/>
        <end position="142"/>
    </location>
</feature>
<feature type="helix" evidence="2">
    <location>
        <begin position="148"/>
        <end position="161"/>
    </location>
</feature>
<feature type="turn" evidence="2">
    <location>
        <begin position="162"/>
        <end position="165"/>
    </location>
</feature>
<feature type="strand" evidence="2">
    <location>
        <begin position="167"/>
        <end position="170"/>
    </location>
</feature>
<feature type="strand" evidence="2">
    <location>
        <begin position="173"/>
        <end position="175"/>
    </location>
</feature>
<feature type="turn" evidence="3">
    <location>
        <begin position="176"/>
        <end position="178"/>
    </location>
</feature>
<feature type="helix" evidence="2">
    <location>
        <begin position="181"/>
        <end position="183"/>
    </location>
</feature>
<feature type="helix" evidence="2">
    <location>
        <begin position="186"/>
        <end position="194"/>
    </location>
</feature>
<sequence length="199" mass="22117">MSYYSTSVAKLIEELSKLPGIGPKTAQRLAFFIINMPLDEVRSLSQAIIEAKEKLRYCKICFNITDKEVCDICSDENRDHSTICVVSHPMDVVAMEKVKEYKGVYHVLHGVISPIEGVGPEDIRIKELLERVRDGSVKEVILATNPDIEGEATAMYIAKLLKPFGVKVTRIAHGIPVGGDLEYTDVVTLSKALEGRREV</sequence>
<gene>
    <name evidence="1" type="primary">recR</name>
    <name type="ordered locus">TTE0041</name>
</gene>
<keyword id="KW-0002">3D-structure</keyword>
<keyword id="KW-0227">DNA damage</keyword>
<keyword id="KW-0233">DNA recombination</keyword>
<keyword id="KW-0234">DNA repair</keyword>
<keyword id="KW-0479">Metal-binding</keyword>
<keyword id="KW-1185">Reference proteome</keyword>
<keyword id="KW-0862">Zinc</keyword>
<keyword id="KW-0863">Zinc-finger</keyword>
<comment type="function">
    <text evidence="1">May play a role in DNA repair. It seems to be involved in an RecBC-independent recombinational process of DNA repair. It may act with RecF and RecO.</text>
</comment>
<comment type="similarity">
    <text evidence="1">Belongs to the RecR family.</text>
</comment>
<protein>
    <recommendedName>
        <fullName evidence="1">Recombination protein RecR</fullName>
    </recommendedName>
</protein>
<name>RECR_CALS4</name>
<evidence type="ECO:0000255" key="1">
    <source>
        <dbReference type="HAMAP-Rule" id="MF_00017"/>
    </source>
</evidence>
<evidence type="ECO:0007829" key="2">
    <source>
        <dbReference type="PDB" id="3VDP"/>
    </source>
</evidence>
<evidence type="ECO:0007829" key="3">
    <source>
        <dbReference type="PDB" id="3VE5"/>
    </source>
</evidence>
<reference key="1">
    <citation type="journal article" date="2002" name="Genome Res.">
        <title>A complete sequence of the T. tengcongensis genome.</title>
        <authorList>
            <person name="Bao Q."/>
            <person name="Tian Y."/>
            <person name="Li W."/>
            <person name="Xu Z."/>
            <person name="Xuan Z."/>
            <person name="Hu S."/>
            <person name="Dong W."/>
            <person name="Yang J."/>
            <person name="Chen Y."/>
            <person name="Xue Y."/>
            <person name="Xu Y."/>
            <person name="Lai X."/>
            <person name="Huang L."/>
            <person name="Dong X."/>
            <person name="Ma Y."/>
            <person name="Ling L."/>
            <person name="Tan H."/>
            <person name="Chen R."/>
            <person name="Wang J."/>
            <person name="Yu J."/>
            <person name="Yang H."/>
        </authorList>
    </citation>
    <scope>NUCLEOTIDE SEQUENCE [LARGE SCALE GENOMIC DNA]</scope>
    <source>
        <strain>DSM 15242 / JCM 11007 / NBRC 100824 / MB4</strain>
    </source>
</reference>
<organism>
    <name type="scientific">Caldanaerobacter subterraneus subsp. tengcongensis (strain DSM 15242 / JCM 11007 / NBRC 100824 / MB4)</name>
    <name type="common">Thermoanaerobacter tengcongensis</name>
    <dbReference type="NCBI Taxonomy" id="273068"/>
    <lineage>
        <taxon>Bacteria</taxon>
        <taxon>Bacillati</taxon>
        <taxon>Bacillota</taxon>
        <taxon>Clostridia</taxon>
        <taxon>Thermoanaerobacterales</taxon>
        <taxon>Thermoanaerobacteraceae</taxon>
        <taxon>Caldanaerobacter</taxon>
    </lineage>
</organism>
<proteinExistence type="evidence at protein level"/>
<dbReference type="EMBL" id="AE008691">
    <property type="protein sequence ID" value="AAM23354.1"/>
    <property type="molecule type" value="Genomic_DNA"/>
</dbReference>
<dbReference type="RefSeq" id="WP_011024567.1">
    <property type="nucleotide sequence ID" value="NC_003869.1"/>
</dbReference>
<dbReference type="PDB" id="3VDP">
    <property type="method" value="X-ray"/>
    <property type="resolution" value="2.45 A"/>
    <property type="chains" value="A/B/C/D=1-199"/>
</dbReference>
<dbReference type="PDB" id="3VDU">
    <property type="method" value="X-ray"/>
    <property type="resolution" value="2.80 A"/>
    <property type="chains" value="A=1-199"/>
</dbReference>
<dbReference type="PDB" id="3VE5">
    <property type="method" value="X-ray"/>
    <property type="resolution" value="2.80 A"/>
    <property type="chains" value="A/D=19-199"/>
</dbReference>
<dbReference type="PDB" id="4O6O">
    <property type="method" value="X-ray"/>
    <property type="resolution" value="3.00 A"/>
    <property type="chains" value="A/B/C/D=1-199"/>
</dbReference>
<dbReference type="PDB" id="4O6P">
    <property type="method" value="X-ray"/>
    <property type="resolution" value="3.00 A"/>
    <property type="chains" value="B/C=1-199"/>
</dbReference>
<dbReference type="PDBsum" id="3VDP"/>
<dbReference type="PDBsum" id="3VDU"/>
<dbReference type="PDBsum" id="3VE5"/>
<dbReference type="PDBsum" id="4O6O"/>
<dbReference type="PDBsum" id="4O6P"/>
<dbReference type="SMR" id="Q8RDI4"/>
<dbReference type="STRING" id="273068.TTE0041"/>
<dbReference type="KEGG" id="tte:TTE0041"/>
<dbReference type="eggNOG" id="COG0353">
    <property type="taxonomic scope" value="Bacteria"/>
</dbReference>
<dbReference type="HOGENOM" id="CLU_060739_1_0_9"/>
<dbReference type="OrthoDB" id="9802672at2"/>
<dbReference type="EvolutionaryTrace" id="Q8RDI4"/>
<dbReference type="Proteomes" id="UP000000555">
    <property type="component" value="Chromosome"/>
</dbReference>
<dbReference type="GO" id="GO:0003677">
    <property type="term" value="F:DNA binding"/>
    <property type="evidence" value="ECO:0007669"/>
    <property type="project" value="UniProtKB-UniRule"/>
</dbReference>
<dbReference type="GO" id="GO:0008270">
    <property type="term" value="F:zinc ion binding"/>
    <property type="evidence" value="ECO:0007669"/>
    <property type="project" value="UniProtKB-KW"/>
</dbReference>
<dbReference type="GO" id="GO:0006310">
    <property type="term" value="P:DNA recombination"/>
    <property type="evidence" value="ECO:0007669"/>
    <property type="project" value="UniProtKB-UniRule"/>
</dbReference>
<dbReference type="GO" id="GO:0006281">
    <property type="term" value="P:DNA repair"/>
    <property type="evidence" value="ECO:0007669"/>
    <property type="project" value="UniProtKB-UniRule"/>
</dbReference>
<dbReference type="CDD" id="cd01025">
    <property type="entry name" value="TOPRIM_recR"/>
    <property type="match status" value="1"/>
</dbReference>
<dbReference type="Gene3D" id="3.30.60.80">
    <property type="match status" value="1"/>
</dbReference>
<dbReference type="Gene3D" id="3.40.1360.10">
    <property type="match status" value="1"/>
</dbReference>
<dbReference type="Gene3D" id="6.10.250.240">
    <property type="match status" value="1"/>
</dbReference>
<dbReference type="Gene3D" id="1.10.8.420">
    <property type="entry name" value="RecR Domain 1"/>
    <property type="match status" value="1"/>
</dbReference>
<dbReference type="HAMAP" id="MF_00017">
    <property type="entry name" value="RecR"/>
    <property type="match status" value="1"/>
</dbReference>
<dbReference type="InterPro" id="IPR000093">
    <property type="entry name" value="DNA_Rcmb_RecR"/>
</dbReference>
<dbReference type="InterPro" id="IPR003583">
    <property type="entry name" value="Hlx-hairpin-Hlx_DNA-bd_motif"/>
</dbReference>
<dbReference type="InterPro" id="IPR023627">
    <property type="entry name" value="Rcmb_RecR"/>
</dbReference>
<dbReference type="InterPro" id="IPR015967">
    <property type="entry name" value="Rcmb_RecR_Znf"/>
</dbReference>
<dbReference type="InterPro" id="IPR006171">
    <property type="entry name" value="TOPRIM_dom"/>
</dbReference>
<dbReference type="InterPro" id="IPR034137">
    <property type="entry name" value="TOPRIM_RecR"/>
</dbReference>
<dbReference type="NCBIfam" id="TIGR00615">
    <property type="entry name" value="recR"/>
    <property type="match status" value="1"/>
</dbReference>
<dbReference type="PANTHER" id="PTHR30446">
    <property type="entry name" value="RECOMBINATION PROTEIN RECR"/>
    <property type="match status" value="1"/>
</dbReference>
<dbReference type="PANTHER" id="PTHR30446:SF0">
    <property type="entry name" value="RECOMBINATION PROTEIN RECR"/>
    <property type="match status" value="1"/>
</dbReference>
<dbReference type="Pfam" id="PF21175">
    <property type="entry name" value="RecR_C"/>
    <property type="match status" value="1"/>
</dbReference>
<dbReference type="Pfam" id="PF21176">
    <property type="entry name" value="RecR_HhH"/>
    <property type="match status" value="1"/>
</dbReference>
<dbReference type="Pfam" id="PF02132">
    <property type="entry name" value="RecR_ZnF"/>
    <property type="match status" value="1"/>
</dbReference>
<dbReference type="Pfam" id="PF13662">
    <property type="entry name" value="Toprim_4"/>
    <property type="match status" value="1"/>
</dbReference>
<dbReference type="SMART" id="SM00278">
    <property type="entry name" value="HhH1"/>
    <property type="match status" value="1"/>
</dbReference>
<dbReference type="SMART" id="SM00493">
    <property type="entry name" value="TOPRIM"/>
    <property type="match status" value="1"/>
</dbReference>
<dbReference type="SUPFAM" id="SSF111304">
    <property type="entry name" value="Recombination protein RecR"/>
    <property type="match status" value="1"/>
</dbReference>
<dbReference type="PROSITE" id="PS01300">
    <property type="entry name" value="RECR"/>
    <property type="match status" value="1"/>
</dbReference>
<dbReference type="PROSITE" id="PS50880">
    <property type="entry name" value="TOPRIM"/>
    <property type="match status" value="1"/>
</dbReference>